<dbReference type="EC" id="4.2.3.145" evidence="6"/>
<dbReference type="EC" id="2.5.1.29" evidence="6"/>
<dbReference type="EC" id="2.5.1.81" evidence="6"/>
<dbReference type="EMBL" id="LC127211">
    <property type="protein sequence ID" value="BAX09282.1"/>
    <property type="molecule type" value="Genomic_DNA"/>
</dbReference>
<dbReference type="SMR" id="A0A1V1FVQ6"/>
<dbReference type="UniPathway" id="UPA00213"/>
<dbReference type="GO" id="GO:0044687">
    <property type="term" value="F:geranylfarnesyl diphosphate synthase activity"/>
    <property type="evidence" value="ECO:0007669"/>
    <property type="project" value="UniProtKB-EC"/>
</dbReference>
<dbReference type="GO" id="GO:0004311">
    <property type="term" value="F:geranylgeranyl diphosphate synthase activity"/>
    <property type="evidence" value="ECO:0007669"/>
    <property type="project" value="UniProtKB-EC"/>
</dbReference>
<dbReference type="GO" id="GO:0016829">
    <property type="term" value="F:lyase activity"/>
    <property type="evidence" value="ECO:0007669"/>
    <property type="project" value="UniProtKB-KW"/>
</dbReference>
<dbReference type="GO" id="GO:0046872">
    <property type="term" value="F:metal ion binding"/>
    <property type="evidence" value="ECO:0007669"/>
    <property type="project" value="UniProtKB-KW"/>
</dbReference>
<dbReference type="GO" id="GO:0046165">
    <property type="term" value="P:alcohol biosynthetic process"/>
    <property type="evidence" value="ECO:0007669"/>
    <property type="project" value="UniProtKB-ARBA"/>
</dbReference>
<dbReference type="GO" id="GO:0043386">
    <property type="term" value="P:mycotoxin biosynthetic process"/>
    <property type="evidence" value="ECO:0007669"/>
    <property type="project" value="UniProtKB-ARBA"/>
</dbReference>
<dbReference type="GO" id="GO:0016114">
    <property type="term" value="P:terpenoid biosynthetic process"/>
    <property type="evidence" value="ECO:0007669"/>
    <property type="project" value="UniProtKB-UniPathway"/>
</dbReference>
<dbReference type="Gene3D" id="1.10.600.10">
    <property type="entry name" value="Farnesyl Diphosphate Synthase"/>
    <property type="match status" value="2"/>
</dbReference>
<dbReference type="InterPro" id="IPR008949">
    <property type="entry name" value="Isoprenoid_synthase_dom_sf"/>
</dbReference>
<dbReference type="InterPro" id="IPR000092">
    <property type="entry name" value="Polyprenyl_synt"/>
</dbReference>
<dbReference type="InterPro" id="IPR033749">
    <property type="entry name" value="Polyprenyl_synt_CS"/>
</dbReference>
<dbReference type="PANTHER" id="PTHR12001">
    <property type="entry name" value="GERANYLGERANYL PYROPHOSPHATE SYNTHASE"/>
    <property type="match status" value="1"/>
</dbReference>
<dbReference type="PANTHER" id="PTHR12001:SF72">
    <property type="entry name" value="THIJ_PFPI FAMILY PROTEIN (AFU_ORTHOLOGUE AFUA_3G01210)-RELATED"/>
    <property type="match status" value="1"/>
</dbReference>
<dbReference type="Pfam" id="PF00348">
    <property type="entry name" value="polyprenyl_synt"/>
    <property type="match status" value="1"/>
</dbReference>
<dbReference type="Pfam" id="PF19086">
    <property type="entry name" value="Terpene_syn_C_2"/>
    <property type="match status" value="1"/>
</dbReference>
<dbReference type="SFLD" id="SFLDS00005">
    <property type="entry name" value="Isoprenoid_Synthase_Type_I"/>
    <property type="match status" value="1"/>
</dbReference>
<dbReference type="SUPFAM" id="SSF48576">
    <property type="entry name" value="Terpenoid synthases"/>
    <property type="match status" value="2"/>
</dbReference>
<dbReference type="PROSITE" id="PS00444">
    <property type="entry name" value="POLYPRENYL_SYNTHASE_2"/>
    <property type="match status" value="1"/>
</dbReference>
<feature type="chain" id="PRO_0000451168" description="Ophiobolin F synthase oblA">
    <location>
        <begin position="1"/>
        <end position="728"/>
    </location>
</feature>
<feature type="region of interest" description="(7Z)-ophiobola-7,19-dien-3-ol synthase" evidence="1">
    <location>
        <begin position="1"/>
        <end position="322"/>
    </location>
</feature>
<feature type="region of interest" description="Geranylfarnesyl diphosphate synthase" evidence="1">
    <location>
        <begin position="323"/>
        <end position="728"/>
    </location>
</feature>
<feature type="region of interest" description="Disordered" evidence="5">
    <location>
        <begin position="362"/>
        <end position="394"/>
    </location>
</feature>
<feature type="short sequence motif" description="DDXXD 1" evidence="1">
    <location>
        <begin position="93"/>
        <end position="97"/>
    </location>
</feature>
<feature type="short sequence motif" description="NSE/DTE" evidence="1">
    <location>
        <begin position="226"/>
        <end position="234"/>
    </location>
</feature>
<feature type="short sequence motif" description="DDXXD 2" evidence="1">
    <location>
        <begin position="478"/>
        <end position="482"/>
    </location>
</feature>
<feature type="compositionally biased region" description="Low complexity" evidence="5">
    <location>
        <begin position="362"/>
        <end position="371"/>
    </location>
</feature>
<feature type="binding site" evidence="4">
    <location>
        <position position="93"/>
    </location>
    <ligand>
        <name>Mg(2+)</name>
        <dbReference type="ChEBI" id="CHEBI:18420"/>
        <label>1</label>
    </ligand>
</feature>
<feature type="binding site" evidence="4">
    <location>
        <position position="93"/>
    </location>
    <ligand>
        <name>Mg(2+)</name>
        <dbReference type="ChEBI" id="CHEBI:18420"/>
        <label>2</label>
    </ligand>
</feature>
<feature type="binding site" evidence="2">
    <location>
        <position position="93"/>
    </location>
    <ligand>
        <name>substrate</name>
    </ligand>
</feature>
<feature type="binding site" evidence="4">
    <location>
        <position position="97"/>
    </location>
    <ligand>
        <name>Mg(2+)</name>
        <dbReference type="ChEBI" id="CHEBI:18420"/>
        <label>1</label>
    </ligand>
</feature>
<feature type="binding site" evidence="4">
    <location>
        <position position="97"/>
    </location>
    <ligand>
        <name>Mg(2+)</name>
        <dbReference type="ChEBI" id="CHEBI:18420"/>
        <label>2</label>
    </ligand>
</feature>
<feature type="binding site" evidence="2">
    <location>
        <begin position="182"/>
        <end position="185"/>
    </location>
    <ligand>
        <name>substrate</name>
    </ligand>
</feature>
<feature type="binding site" evidence="2">
    <location>
        <position position="226"/>
    </location>
    <ligand>
        <name>substrate</name>
    </ligand>
</feature>
<feature type="binding site" evidence="2">
    <location>
        <begin position="230"/>
        <end position="234"/>
    </location>
    <ligand>
        <name>substrate</name>
    </ligand>
</feature>
<feature type="binding site" evidence="2">
    <location>
        <begin position="313"/>
        <end position="314"/>
    </location>
    <ligand>
        <name>substrate</name>
    </ligand>
</feature>
<feature type="binding site" evidence="3">
    <location>
        <position position="439"/>
    </location>
    <ligand>
        <name>isopentenyl diphosphate</name>
        <dbReference type="ChEBI" id="CHEBI:128769"/>
    </ligand>
</feature>
<feature type="binding site" evidence="3">
    <location>
        <position position="442"/>
    </location>
    <ligand>
        <name>isopentenyl diphosphate</name>
        <dbReference type="ChEBI" id="CHEBI:128769"/>
    </ligand>
</feature>
<feature type="binding site" evidence="3">
    <location>
        <position position="471"/>
    </location>
    <ligand>
        <name>isopentenyl diphosphate</name>
        <dbReference type="ChEBI" id="CHEBI:128769"/>
    </ligand>
</feature>
<feature type="binding site" evidence="3">
    <location>
        <position position="478"/>
    </location>
    <ligand>
        <name>Mg(2+)</name>
        <dbReference type="ChEBI" id="CHEBI:18420"/>
        <label>3</label>
    </ligand>
</feature>
<feature type="binding site" evidence="3">
    <location>
        <position position="478"/>
    </location>
    <ligand>
        <name>Mg(2+)</name>
        <dbReference type="ChEBI" id="CHEBI:18420"/>
        <label>4</label>
    </ligand>
</feature>
<feature type="binding site" evidence="3">
    <location>
        <position position="482"/>
    </location>
    <ligand>
        <name>Mg(2+)</name>
        <dbReference type="ChEBI" id="CHEBI:18420"/>
        <label>3</label>
    </ligand>
</feature>
<feature type="binding site" evidence="3">
    <location>
        <position position="482"/>
    </location>
    <ligand>
        <name>Mg(2+)</name>
        <dbReference type="ChEBI" id="CHEBI:18420"/>
        <label>4</label>
    </ligand>
</feature>
<feature type="binding site" evidence="3">
    <location>
        <position position="487"/>
    </location>
    <ligand>
        <name>dimethylallyl diphosphate</name>
        <dbReference type="ChEBI" id="CHEBI:57623"/>
    </ligand>
</feature>
<feature type="binding site" evidence="3">
    <location>
        <position position="488"/>
    </location>
    <ligand>
        <name>isopentenyl diphosphate</name>
        <dbReference type="ChEBI" id="CHEBI:128769"/>
    </ligand>
</feature>
<feature type="binding site" evidence="3">
    <location>
        <position position="565"/>
    </location>
    <ligand>
        <name>dimethylallyl diphosphate</name>
        <dbReference type="ChEBI" id="CHEBI:57623"/>
    </ligand>
</feature>
<feature type="binding site" evidence="3">
    <location>
        <position position="566"/>
    </location>
    <ligand>
        <name>dimethylallyl diphosphate</name>
        <dbReference type="ChEBI" id="CHEBI:57623"/>
    </ligand>
</feature>
<feature type="binding site" evidence="3">
    <location>
        <position position="604"/>
    </location>
    <ligand>
        <name>dimethylallyl diphosphate</name>
        <dbReference type="ChEBI" id="CHEBI:57623"/>
    </ligand>
</feature>
<feature type="binding site" evidence="3">
    <location>
        <position position="611"/>
    </location>
    <ligand>
        <name>dimethylallyl diphosphate</name>
        <dbReference type="ChEBI" id="CHEBI:57623"/>
    </ligand>
</feature>
<feature type="binding site" evidence="3">
    <location>
        <position position="621"/>
    </location>
    <ligand>
        <name>dimethylallyl diphosphate</name>
        <dbReference type="ChEBI" id="CHEBI:57623"/>
    </ligand>
</feature>
<feature type="binding site" evidence="3">
    <location>
        <position position="631"/>
    </location>
    <ligand>
        <name>dimethylallyl diphosphate</name>
        <dbReference type="ChEBI" id="CHEBI:57623"/>
    </ligand>
</feature>
<reference key="1">
    <citation type="journal article" date="2016" name="Org. Lett.">
        <title>Multiple oxidative modifications in the ophiobolin biosynthesis: P450 oxidations found in genome mining.</title>
        <authorList>
            <person name="Narita K."/>
            <person name="Chiba R."/>
            <person name="Minami A."/>
            <person name="Kodama M."/>
            <person name="Fujii I."/>
            <person name="Gomi K."/>
            <person name="Oikawa H."/>
        </authorList>
    </citation>
    <scope>NUCLEOTIDE SEQUENCE [GENOMIC DNA]</scope>
    <scope>FUNCTION</scope>
    <scope>CATALYTIC ACTIVITY</scope>
    <source>
        <strain>GF10</strain>
    </source>
</reference>
<name>OBLA_EMEVA</name>
<sequence>MEYKYSTIVDKSKWDPEGLTEGIPLRRHEAGDLEEVGSFRVQEDWRRLVGPLENPYRGSLGPEISFITYTVPECLPERLEAISYSLDYGFMHDDEIDLNIASAELSDVGGALKQGGATGKIDEGKSSSGKRKMAAQLLREMMALDPERAMALAKSWAQGVQHSARRVEEKDWKSLDEYIPFRCMDLGYMHWHGLVTFGCAITVPEEEEEERRRLLEPAVIACMMTNDLFSYEKEKNDNNPQNAVTVIMKINKCGEEEAKEVCKKRIRVECAKYAQIVKETLARTDISLDLKKYIEIMQYTVSGNWAWSTQCPRYHFPGRWNELQKLRAEHGIAKYPARYSLKERTNGVNGVNGVNGINGTNGINGTNGVNGKRNRDEDGDENDARINGNGFKKPALTSQGKDSFVLDDVVALSLNLHLPDLGDGVVLQPYRYLTSLPSKGFRDMAIDALNTWLRVPSTSTSTIKDLIKKLHSASLMLDDIEDNSPLRRAKPSTHIIYGNAQTINSATYQYTEATSLAANLSNPLSLRIFLDEIQQLYIGQSYDLYWTHNALCPSITEYLRMVDQKTGGLFRMLTRLMVAESPGSNKILDRALFPLSHLIGRFFQIRDDYQNLSSAEYSRQKGFVEDLDEGKYSFTLIHCIQTVEANEALASEMMALRAFLIKRRVDGGLSNEAKMEVLGIMKKTKSLEYTLGVLRALQEELEREVGRLEGKFGEENLPLRLMVDMLKV</sequence>
<comment type="function">
    <text evidence="1 6 9">Bifunctional sesterterpene synthase; part of the gene cluster that mediates the biosynthesis of the sesterterpenes ophiobolins, fungal phytotoxins with potential anti-cancer activities (PubMed:27116000). The first step of the pathway is performed by the sesterterpene synthase oblA that possesses both prenyl transferase and terpene cyclase activity, converting isopentenyl diphosphate and dimethylallyl diphosphate into geranylfarnesyl diphosphate (GFPP) and further converting GFPP into ophiobolin F, respectively (By similarity). Other sesterterpenoids (C(25) terpenoids) are found as minor products of oblA (By similarity). The cytochrome P450 monooxygenase oblB then catalyzes a four-step oxidative transformation of ophiobolin F to yield ophiobolin C (PubMed:27116000). The function of the cytochrome P450 monooxygenase oblE has still to be determined (Probable).</text>
</comment>
<comment type="catalytic activity">
    <reaction evidence="6">
        <text>isopentenyl diphosphate + (2E,6E)-farnesyl diphosphate = (2E,6E,10E)-geranylgeranyl diphosphate + diphosphate</text>
        <dbReference type="Rhea" id="RHEA:17653"/>
        <dbReference type="ChEBI" id="CHEBI:33019"/>
        <dbReference type="ChEBI" id="CHEBI:58756"/>
        <dbReference type="ChEBI" id="CHEBI:128769"/>
        <dbReference type="ChEBI" id="CHEBI:175763"/>
        <dbReference type="EC" id="2.5.1.29"/>
    </reaction>
    <physiologicalReaction direction="left-to-right" evidence="6">
        <dbReference type="Rhea" id="RHEA:17654"/>
    </physiologicalReaction>
</comment>
<comment type="catalytic activity">
    <reaction evidence="6">
        <text>isopentenyl diphosphate + (2E,6E,10E)-geranylgeranyl diphosphate = (2E,6E,10E,14E)-geranylfarnesyl diphosphate + diphosphate</text>
        <dbReference type="Rhea" id="RHEA:25694"/>
        <dbReference type="ChEBI" id="CHEBI:33019"/>
        <dbReference type="ChEBI" id="CHEBI:57907"/>
        <dbReference type="ChEBI" id="CHEBI:58756"/>
        <dbReference type="ChEBI" id="CHEBI:128769"/>
        <dbReference type="EC" id="2.5.1.81"/>
    </reaction>
    <physiologicalReaction direction="left-to-right" evidence="6">
        <dbReference type="Rhea" id="RHEA:25695"/>
    </physiologicalReaction>
</comment>
<comment type="catalytic activity">
    <reaction evidence="6">
        <text>(2E,6E,10E,14E)-geranylfarnesyl diphosphate + H2O = ophiobolin F + diphosphate</text>
        <dbReference type="Rhea" id="RHEA:41552"/>
        <dbReference type="ChEBI" id="CHEBI:15377"/>
        <dbReference type="ChEBI" id="CHEBI:33019"/>
        <dbReference type="ChEBI" id="CHEBI:57907"/>
        <dbReference type="ChEBI" id="CHEBI:78293"/>
        <dbReference type="EC" id="4.2.3.145"/>
    </reaction>
    <physiologicalReaction direction="left-to-right" evidence="6">
        <dbReference type="Rhea" id="RHEA:41553"/>
    </physiologicalReaction>
</comment>
<comment type="cofactor">
    <cofactor evidence="3 4">
        <name>Mg(2+)</name>
        <dbReference type="ChEBI" id="CHEBI:18420"/>
    </cofactor>
    <text evidence="3 4">Binds 4 Mg(2+) ions per subunit.</text>
</comment>
<comment type="pathway">
    <text evidence="9">Secondary metabolite biosynthesis; terpenoid biosynthesis.</text>
</comment>
<comment type="domain">
    <text evidence="1">The conserved DDXXD motifs as well as the NSE/DTE motif are important for the catalytic activity, presumably through binding to Mg(2+).</text>
</comment>
<comment type="similarity">
    <text evidence="8">In the N-terminal section; belongs to the terpene synthase family.</text>
</comment>
<comment type="similarity">
    <text evidence="8">In the C-terminal section; belongs to the FPP/GGPP synthase family.</text>
</comment>
<proteinExistence type="evidence at protein level"/>
<keyword id="KW-0414">Isoprene biosynthesis</keyword>
<keyword id="KW-0456">Lyase</keyword>
<keyword id="KW-0460">Magnesium</keyword>
<keyword id="KW-0479">Metal-binding</keyword>
<keyword id="KW-0511">Multifunctional enzyme</keyword>
<keyword id="KW-0808">Transferase</keyword>
<organism>
    <name type="scientific">Emericella variicolor</name>
    <name type="common">Aspergillus stellatus</name>
    <dbReference type="NCBI Taxonomy" id="1549217"/>
    <lineage>
        <taxon>Eukaryota</taxon>
        <taxon>Fungi</taxon>
        <taxon>Dikarya</taxon>
        <taxon>Ascomycota</taxon>
        <taxon>Pezizomycotina</taxon>
        <taxon>Eurotiomycetes</taxon>
        <taxon>Eurotiomycetidae</taxon>
        <taxon>Eurotiales</taxon>
        <taxon>Aspergillaceae</taxon>
        <taxon>Aspergillus</taxon>
        <taxon>Aspergillus subgen. Nidulantes</taxon>
    </lineage>
</organism>
<protein>
    <recommendedName>
        <fullName evidence="7">Ophiobolin F synthase oblA</fullName>
    </recommendedName>
    <alternativeName>
        <fullName evidence="7">Bifunctional sesterterpene synthase oblA</fullName>
    </alternativeName>
    <alternativeName>
        <fullName evidence="7">Ophiobolin biosynthesis cluster protein A</fullName>
    </alternativeName>
    <domain>
        <recommendedName>
            <fullName evidence="7">Ophiobolin F cyclase</fullName>
            <ecNumber evidence="6">4.2.3.145</ecNumber>
        </recommendedName>
    </domain>
    <domain>
        <recommendedName>
            <fullName evidence="7">Geranylgeranyl diphosphate synthase</fullName>
            <shortName evidence="7">GGDP synthase</shortName>
            <shortName evidence="7">GGS</shortName>
            <ecNumber evidence="6">2.5.1.29</ecNumber>
        </recommendedName>
    </domain>
    <domain>
        <recommendedName>
            <fullName evidence="7">Geranylfarnesyl diphosphate synthase</fullName>
            <shortName evidence="7">GFDP synthase</shortName>
            <ecNumber evidence="6">2.5.1.81</ecNumber>
        </recommendedName>
    </domain>
</protein>
<gene>
    <name evidence="7" type="primary">oblA</name>
</gene>
<accession>A0A1V1FVQ6</accession>
<evidence type="ECO:0000250" key="1">
    <source>
        <dbReference type="UniProtKB" id="A1C8C3"/>
    </source>
</evidence>
<evidence type="ECO:0000250" key="2">
    <source>
        <dbReference type="UniProtKB" id="A2PZA5"/>
    </source>
</evidence>
<evidence type="ECO:0000250" key="3">
    <source>
        <dbReference type="UniProtKB" id="Q12051"/>
    </source>
</evidence>
<evidence type="ECO:0000250" key="4">
    <source>
        <dbReference type="UniProtKB" id="Q40577"/>
    </source>
</evidence>
<evidence type="ECO:0000256" key="5">
    <source>
        <dbReference type="SAM" id="MobiDB-lite"/>
    </source>
</evidence>
<evidence type="ECO:0000269" key="6">
    <source>
    </source>
</evidence>
<evidence type="ECO:0000303" key="7">
    <source>
    </source>
</evidence>
<evidence type="ECO:0000305" key="8"/>
<evidence type="ECO:0000305" key="9">
    <source>
    </source>
</evidence>